<proteinExistence type="inferred from homology"/>
<keyword id="KW-0997">Cell inner membrane</keyword>
<keyword id="KW-1003">Cell membrane</keyword>
<keyword id="KW-0407">Ion channel</keyword>
<keyword id="KW-0406">Ion transport</keyword>
<keyword id="KW-0472">Membrane</keyword>
<keyword id="KW-0479">Metal-binding</keyword>
<keyword id="KW-0915">Sodium</keyword>
<keyword id="KW-0812">Transmembrane</keyword>
<keyword id="KW-1133">Transmembrane helix</keyword>
<keyword id="KW-0813">Transport</keyword>
<comment type="function">
    <text evidence="1">Fluoride-specific ion channel. Important for reducing fluoride concentration in the cell, thus reducing its toxicity.</text>
</comment>
<comment type="catalytic activity">
    <reaction evidence="1">
        <text>fluoride(in) = fluoride(out)</text>
        <dbReference type="Rhea" id="RHEA:76159"/>
        <dbReference type="ChEBI" id="CHEBI:17051"/>
    </reaction>
    <physiologicalReaction direction="left-to-right" evidence="1">
        <dbReference type="Rhea" id="RHEA:76160"/>
    </physiologicalReaction>
</comment>
<comment type="activity regulation">
    <text evidence="1">Na(+) is not transported, but it plays an essential structural role and its presence is essential for fluoride channel function.</text>
</comment>
<comment type="subcellular location">
    <subcellularLocation>
        <location evidence="1">Cell inner membrane</location>
        <topology evidence="1">Multi-pass membrane protein</topology>
    </subcellularLocation>
</comment>
<comment type="similarity">
    <text evidence="1">Belongs to the fluoride channel Fluc/FEX (TC 1.A.43) family.</text>
</comment>
<name>FLUC_PSEFS</name>
<gene>
    <name evidence="1" type="primary">fluC</name>
    <name evidence="1" type="synonym">crcB</name>
    <name type="ordered locus">PFLU_3798</name>
</gene>
<organism>
    <name type="scientific">Pseudomonas fluorescens (strain SBW25)</name>
    <dbReference type="NCBI Taxonomy" id="216595"/>
    <lineage>
        <taxon>Bacteria</taxon>
        <taxon>Pseudomonadati</taxon>
        <taxon>Pseudomonadota</taxon>
        <taxon>Gammaproteobacteria</taxon>
        <taxon>Pseudomonadales</taxon>
        <taxon>Pseudomonadaceae</taxon>
        <taxon>Pseudomonas</taxon>
    </lineage>
</organism>
<accession>C3JY55</accession>
<evidence type="ECO:0000255" key="1">
    <source>
        <dbReference type="HAMAP-Rule" id="MF_00454"/>
    </source>
</evidence>
<feature type="chain" id="PRO_1000206260" description="Fluoride-specific ion channel FluC">
    <location>
        <begin position="1"/>
        <end position="124"/>
    </location>
</feature>
<feature type="transmembrane region" description="Helical" evidence="1">
    <location>
        <begin position="5"/>
        <end position="25"/>
    </location>
</feature>
<feature type="transmembrane region" description="Helical" evidence="1">
    <location>
        <begin position="38"/>
        <end position="58"/>
    </location>
</feature>
<feature type="transmembrane region" description="Helical" evidence="1">
    <location>
        <begin position="69"/>
        <end position="89"/>
    </location>
</feature>
<feature type="transmembrane region" description="Helical" evidence="1">
    <location>
        <begin position="97"/>
        <end position="117"/>
    </location>
</feature>
<feature type="binding site" evidence="1">
    <location>
        <position position="76"/>
    </location>
    <ligand>
        <name>Na(+)</name>
        <dbReference type="ChEBI" id="CHEBI:29101"/>
        <note>structural</note>
    </ligand>
</feature>
<feature type="binding site" evidence="1">
    <location>
        <position position="79"/>
    </location>
    <ligand>
        <name>Na(+)</name>
        <dbReference type="ChEBI" id="CHEBI:29101"/>
        <note>structural</note>
    </ligand>
</feature>
<reference key="1">
    <citation type="journal article" date="2009" name="Genome Biol.">
        <title>Genomic and genetic analyses of diversity and plant interactions of Pseudomonas fluorescens.</title>
        <authorList>
            <person name="Silby M.W."/>
            <person name="Cerdeno-Tarraga A.M."/>
            <person name="Vernikos G.S."/>
            <person name="Giddens S.R."/>
            <person name="Jackson R.W."/>
            <person name="Preston G.M."/>
            <person name="Zhang X.-X."/>
            <person name="Moon C.D."/>
            <person name="Gehrig S.M."/>
            <person name="Godfrey S.A.C."/>
            <person name="Knight C.G."/>
            <person name="Malone J.G."/>
            <person name="Robinson Z."/>
            <person name="Spiers A.J."/>
            <person name="Harris S."/>
            <person name="Challis G.L."/>
            <person name="Yaxley A.M."/>
            <person name="Harris D."/>
            <person name="Seeger K."/>
            <person name="Murphy L."/>
            <person name="Rutter S."/>
            <person name="Squares R."/>
            <person name="Quail M.A."/>
            <person name="Saunders E."/>
            <person name="Mavromatis K."/>
            <person name="Brettin T.S."/>
            <person name="Bentley S.D."/>
            <person name="Hothersall J."/>
            <person name="Stephens E."/>
            <person name="Thomas C.M."/>
            <person name="Parkhill J."/>
            <person name="Levy S.B."/>
            <person name="Rainey P.B."/>
            <person name="Thomson N.R."/>
        </authorList>
    </citation>
    <scope>NUCLEOTIDE SEQUENCE [LARGE SCALE GENOMIC DNA]</scope>
    <source>
        <strain>SBW25</strain>
    </source>
</reference>
<dbReference type="EMBL" id="AM181176">
    <property type="protein sequence ID" value="CAY50101.1"/>
    <property type="molecule type" value="Genomic_DNA"/>
</dbReference>
<dbReference type="RefSeq" id="WP_012724934.1">
    <property type="nucleotide sequence ID" value="NC_012660.1"/>
</dbReference>
<dbReference type="SMR" id="C3JY55"/>
<dbReference type="STRING" id="294.SRM1_03425"/>
<dbReference type="GeneID" id="93465147"/>
<dbReference type="eggNOG" id="COG0239">
    <property type="taxonomic scope" value="Bacteria"/>
</dbReference>
<dbReference type="HOGENOM" id="CLU_114342_2_3_6"/>
<dbReference type="OrthoDB" id="9806299at2"/>
<dbReference type="GO" id="GO:0005886">
    <property type="term" value="C:plasma membrane"/>
    <property type="evidence" value="ECO:0007669"/>
    <property type="project" value="UniProtKB-SubCell"/>
</dbReference>
<dbReference type="GO" id="GO:0062054">
    <property type="term" value="F:fluoride channel activity"/>
    <property type="evidence" value="ECO:0007669"/>
    <property type="project" value="UniProtKB-UniRule"/>
</dbReference>
<dbReference type="GO" id="GO:0046872">
    <property type="term" value="F:metal ion binding"/>
    <property type="evidence" value="ECO:0007669"/>
    <property type="project" value="UniProtKB-KW"/>
</dbReference>
<dbReference type="GO" id="GO:0140114">
    <property type="term" value="P:cellular detoxification of fluoride"/>
    <property type="evidence" value="ECO:0007669"/>
    <property type="project" value="UniProtKB-UniRule"/>
</dbReference>
<dbReference type="HAMAP" id="MF_00454">
    <property type="entry name" value="FluC"/>
    <property type="match status" value="1"/>
</dbReference>
<dbReference type="InterPro" id="IPR003691">
    <property type="entry name" value="FluC"/>
</dbReference>
<dbReference type="NCBIfam" id="NF010830">
    <property type="entry name" value="PRK14234.1"/>
    <property type="match status" value="1"/>
</dbReference>
<dbReference type="PANTHER" id="PTHR28259">
    <property type="entry name" value="FLUORIDE EXPORT PROTEIN 1-RELATED"/>
    <property type="match status" value="1"/>
</dbReference>
<dbReference type="PANTHER" id="PTHR28259:SF1">
    <property type="entry name" value="FLUORIDE EXPORT PROTEIN 1-RELATED"/>
    <property type="match status" value="1"/>
</dbReference>
<dbReference type="Pfam" id="PF02537">
    <property type="entry name" value="CRCB"/>
    <property type="match status" value="1"/>
</dbReference>
<sequence length="124" mass="13108">MFKTILAVSAAGIAGTLLRFAAGTWVSANWPKHFYAATLAVNLVGCLIIGLLYGWFLLRPEVPIEIRAGLIVGFVGGLTTFSSFSLDTLRLLESGQALIAFGYLGISVFGGLLATWAGLSLTKL</sequence>
<protein>
    <recommendedName>
        <fullName evidence="1">Fluoride-specific ion channel FluC</fullName>
    </recommendedName>
</protein>